<name>PSBA_STIHE</name>
<organism>
    <name type="scientific">Stigeoclonium helveticum</name>
    <name type="common">Green alga</name>
    <dbReference type="NCBI Taxonomy" id="55999"/>
    <lineage>
        <taxon>Eukaryota</taxon>
        <taxon>Viridiplantae</taxon>
        <taxon>Chlorophyta</taxon>
        <taxon>core chlorophytes</taxon>
        <taxon>Chlorophyceae</taxon>
        <taxon>OCC clade</taxon>
        <taxon>Chaetophorales</taxon>
        <taxon>Chaetophoraceae</taxon>
        <taxon>Stigeoclonium</taxon>
    </lineage>
</organism>
<comment type="function">
    <text evidence="1">Photosystem II (PSII) is a light-driven water:plastoquinone oxidoreductase that uses light energy to abstract electrons from H(2)O, generating O(2) and a proton gradient subsequently used for ATP formation. It consists of a core antenna complex that captures photons, and an electron transfer chain that converts photonic excitation into a charge separation. The D1/D2 (PsbA/PsbD) reaction center heterodimer binds P680, the primary electron donor of PSII as well as several subsequent electron acceptors.</text>
</comment>
<comment type="catalytic activity">
    <reaction evidence="1">
        <text>2 a plastoquinone + 4 hnu + 2 H2O = 2 a plastoquinol + O2</text>
        <dbReference type="Rhea" id="RHEA:36359"/>
        <dbReference type="Rhea" id="RHEA-COMP:9561"/>
        <dbReference type="Rhea" id="RHEA-COMP:9562"/>
        <dbReference type="ChEBI" id="CHEBI:15377"/>
        <dbReference type="ChEBI" id="CHEBI:15379"/>
        <dbReference type="ChEBI" id="CHEBI:17757"/>
        <dbReference type="ChEBI" id="CHEBI:30212"/>
        <dbReference type="ChEBI" id="CHEBI:62192"/>
        <dbReference type="EC" id="1.10.3.9"/>
    </reaction>
</comment>
<comment type="cofactor">
    <text evidence="1">The D1/D2 heterodimer binds P680, chlorophylls that are the primary electron donor of PSII, and subsequent electron acceptors. It shares a non-heme iron and each subunit binds pheophytin, quinone, additional chlorophylls, carotenoids and lipids. D1 provides most of the ligands for the Mn4-Ca-O5 cluster of the oxygen-evolving complex (OEC). There is also a Cl(-1) ion associated with D1 and D2, which is required for oxygen evolution. The PSII complex binds additional chlorophylls, carotenoids and specific lipids.</text>
</comment>
<comment type="subunit">
    <text evidence="1">PSII is composed of 1 copy each of membrane proteins PsbA, PsbB, PsbC, PsbD, PsbE, PsbF, PsbH, PsbI, PsbJ, PsbK, PsbL, PsbM, PsbT, PsbX, PsbY, PsbZ, Psb30/Ycf12, at least 3 peripheral proteins of the oxygen-evolving complex and a large number of cofactors. It forms dimeric complexes.</text>
</comment>
<comment type="subcellular location">
    <subcellularLocation>
        <location evidence="1">Plastid</location>
        <location evidence="1">Chloroplast thylakoid membrane</location>
        <topology evidence="1">Multi-pass membrane protein</topology>
    </subcellularLocation>
</comment>
<comment type="PTM">
    <text evidence="1">Tyr-161 forms a radical intermediate that is referred to as redox-active TyrZ, YZ or Y-Z.</text>
</comment>
<comment type="PTM">
    <text evidence="1">C-terminally processed by CTPA; processing is essential to allow assembly of the oxygen-evolving complex and thus photosynthetic growth.</text>
</comment>
<comment type="miscellaneous">
    <text evidence="1">2 of the reaction center chlorophylls (ChlD1 and ChlD2) are entirely coordinated by water.</text>
</comment>
<comment type="miscellaneous">
    <text evidence="1">Herbicides such as atrazine, BNT, diuron or ioxynil bind in the Q(B) binding site and block subsequent electron transfer.</text>
</comment>
<comment type="similarity">
    <text evidence="1">Belongs to the reaction center PufL/M/PsbA/D family.</text>
</comment>
<accession>Q06SD2</accession>
<evidence type="ECO:0000255" key="1">
    <source>
        <dbReference type="HAMAP-Rule" id="MF_01379"/>
    </source>
</evidence>
<geneLocation type="chloroplast"/>
<proteinExistence type="inferred from homology"/>
<feature type="initiator methionine" description="Removed" evidence="1">
    <location>
        <position position="1"/>
    </location>
</feature>
<feature type="chain" id="PRO_0000340073" description="Photosystem II protein D1" evidence="1">
    <location>
        <begin position="2"/>
        <end position="344"/>
    </location>
</feature>
<feature type="propeptide" id="PRO_0000340074" evidence="1">
    <location>
        <begin position="345"/>
        <end position="353"/>
    </location>
</feature>
<feature type="transmembrane region" description="Helical" evidence="1">
    <location>
        <begin position="29"/>
        <end position="46"/>
    </location>
</feature>
<feature type="transmembrane region" description="Helical" evidence="1">
    <location>
        <begin position="118"/>
        <end position="133"/>
    </location>
</feature>
<feature type="transmembrane region" description="Helical" evidence="1">
    <location>
        <begin position="142"/>
        <end position="156"/>
    </location>
</feature>
<feature type="transmembrane region" description="Helical" evidence="1">
    <location>
        <begin position="197"/>
        <end position="218"/>
    </location>
</feature>
<feature type="transmembrane region" description="Helical" evidence="1">
    <location>
        <begin position="274"/>
        <end position="288"/>
    </location>
</feature>
<feature type="binding site" description="axial binding residue" evidence="1">
    <location>
        <position position="118"/>
    </location>
    <ligand>
        <name>chlorophyll a</name>
        <dbReference type="ChEBI" id="CHEBI:58416"/>
        <label>ChlzD1</label>
    </ligand>
    <ligandPart>
        <name>Mg</name>
        <dbReference type="ChEBI" id="CHEBI:25107"/>
    </ligandPart>
</feature>
<feature type="binding site" evidence="1">
    <location>
        <position position="126"/>
    </location>
    <ligand>
        <name>pheophytin a</name>
        <dbReference type="ChEBI" id="CHEBI:136840"/>
        <label>D1</label>
    </ligand>
</feature>
<feature type="binding site" evidence="1">
    <location>
        <position position="170"/>
    </location>
    <ligand>
        <name>[CaMn4O5] cluster</name>
        <dbReference type="ChEBI" id="CHEBI:189552"/>
    </ligand>
</feature>
<feature type="binding site" evidence="1">
    <location>
        <position position="189"/>
    </location>
    <ligand>
        <name>[CaMn4O5] cluster</name>
        <dbReference type="ChEBI" id="CHEBI:189552"/>
    </ligand>
</feature>
<feature type="binding site" description="axial binding residue" evidence="1">
    <location>
        <position position="198"/>
    </location>
    <ligand>
        <name>chlorophyll a</name>
        <dbReference type="ChEBI" id="CHEBI:58416"/>
        <label>PD1</label>
    </ligand>
    <ligandPart>
        <name>Mg</name>
        <dbReference type="ChEBI" id="CHEBI:25107"/>
    </ligandPart>
</feature>
<feature type="binding site" evidence="1">
    <location>
        <position position="215"/>
    </location>
    <ligand>
        <name>a quinone</name>
        <dbReference type="ChEBI" id="CHEBI:132124"/>
        <label>B</label>
    </ligand>
</feature>
<feature type="binding site" evidence="1">
    <location>
        <position position="215"/>
    </location>
    <ligand>
        <name>Fe cation</name>
        <dbReference type="ChEBI" id="CHEBI:24875"/>
        <note>ligand shared with heterodimeric partner</note>
    </ligand>
</feature>
<feature type="binding site" evidence="1">
    <location>
        <begin position="264"/>
        <end position="265"/>
    </location>
    <ligand>
        <name>a quinone</name>
        <dbReference type="ChEBI" id="CHEBI:132124"/>
        <label>B</label>
    </ligand>
</feature>
<feature type="binding site" evidence="1">
    <location>
        <position position="272"/>
    </location>
    <ligand>
        <name>Fe cation</name>
        <dbReference type="ChEBI" id="CHEBI:24875"/>
        <note>ligand shared with heterodimeric partner</note>
    </ligand>
</feature>
<feature type="binding site" evidence="1">
    <location>
        <position position="332"/>
    </location>
    <ligand>
        <name>[CaMn4O5] cluster</name>
        <dbReference type="ChEBI" id="CHEBI:189552"/>
    </ligand>
</feature>
<feature type="binding site" evidence="1">
    <location>
        <position position="333"/>
    </location>
    <ligand>
        <name>[CaMn4O5] cluster</name>
        <dbReference type="ChEBI" id="CHEBI:189552"/>
    </ligand>
</feature>
<feature type="binding site" evidence="1">
    <location>
        <position position="342"/>
    </location>
    <ligand>
        <name>[CaMn4O5] cluster</name>
        <dbReference type="ChEBI" id="CHEBI:189552"/>
    </ligand>
</feature>
<feature type="binding site" evidence="1">
    <location>
        <position position="344"/>
    </location>
    <ligand>
        <name>[CaMn4O5] cluster</name>
        <dbReference type="ChEBI" id="CHEBI:189552"/>
    </ligand>
</feature>
<feature type="site" description="Tyrosine radical intermediate" evidence="1">
    <location>
        <position position="161"/>
    </location>
</feature>
<feature type="site" description="Stabilizes free radical intermediate" evidence="1">
    <location>
        <position position="190"/>
    </location>
</feature>
<feature type="site" description="Cleavage; by CTPA" evidence="1">
    <location>
        <begin position="344"/>
        <end position="345"/>
    </location>
</feature>
<feature type="modified residue" description="N-acetylthreonine" evidence="1">
    <location>
        <position position="2"/>
    </location>
</feature>
<feature type="modified residue" description="Phosphothreonine" evidence="1">
    <location>
        <position position="2"/>
    </location>
</feature>
<reference key="1">
    <citation type="journal article" date="2006" name="Mol. Genet. Genomics">
        <title>Distinctive architecture of the chloroplast genome in the chlorophycean green alga Stigeoclonium helveticum.</title>
        <authorList>
            <person name="Belanger A.-S."/>
            <person name="Brouard J.-S."/>
            <person name="Charlebois P."/>
            <person name="Otis C."/>
            <person name="Lemieux C."/>
            <person name="Turmel M."/>
        </authorList>
    </citation>
    <scope>NUCLEOTIDE SEQUENCE [LARGE SCALE GENOMIC DNA]</scope>
    <source>
        <strain>UTEX 441</strain>
    </source>
</reference>
<gene>
    <name evidence="1" type="primary">psbA</name>
</gene>
<keyword id="KW-0007">Acetylation</keyword>
<keyword id="KW-0106">Calcium</keyword>
<keyword id="KW-0148">Chlorophyll</keyword>
<keyword id="KW-0150">Chloroplast</keyword>
<keyword id="KW-0157">Chromophore</keyword>
<keyword id="KW-0249">Electron transport</keyword>
<keyword id="KW-0359">Herbicide resistance</keyword>
<keyword id="KW-0408">Iron</keyword>
<keyword id="KW-0460">Magnesium</keyword>
<keyword id="KW-0464">Manganese</keyword>
<keyword id="KW-0472">Membrane</keyword>
<keyword id="KW-0479">Metal-binding</keyword>
<keyword id="KW-0560">Oxidoreductase</keyword>
<keyword id="KW-0597">Phosphoprotein</keyword>
<keyword id="KW-0602">Photosynthesis</keyword>
<keyword id="KW-0604">Photosystem II</keyword>
<keyword id="KW-0934">Plastid</keyword>
<keyword id="KW-0793">Thylakoid</keyword>
<keyword id="KW-0812">Transmembrane</keyword>
<keyword id="KW-1133">Transmembrane helix</keyword>
<keyword id="KW-0813">Transport</keyword>
<sequence>MTAILEKTEVQSLWARFAAWIVSTENRLYIGWFGVLMIPCLLTATSVFIIAFVAAPPVDIDGIREPVSGSLLYGNNIISGAVVPTSNAIGLHFYPIWEAATVDEWLYNGGPYQLVVCHFFIGICCYMGREWELSYRLGMRPWIAVAYSAPVAAATAVFIIYPIGQGSFSDGMPLGISGTFNFMIVFQAEHNILMHPFHMLGVAGVFGGSLFSAMHGSLVTSSLIRETTEAVSTNAGYRFGQEEETYNILAAHGYFGRLIFQYASFNNSRSLHFFLAIWPVVGIWFTALGLSTMAFNLNGLNFNQSIVDSQGRVVNTWADIINRANLGMEVMHERNAHNFPLDLASVEAPSING</sequence>
<dbReference type="EC" id="1.10.3.9" evidence="1"/>
<dbReference type="EMBL" id="DQ630521">
    <property type="protein sequence ID" value="ABF60166.1"/>
    <property type="molecule type" value="Genomic_DNA"/>
</dbReference>
<dbReference type="RefSeq" id="YP_764434.1">
    <property type="nucleotide sequence ID" value="NC_008372.1"/>
</dbReference>
<dbReference type="SMR" id="Q06SD2"/>
<dbReference type="GeneID" id="4308409"/>
<dbReference type="GO" id="GO:0009535">
    <property type="term" value="C:chloroplast thylakoid membrane"/>
    <property type="evidence" value="ECO:0007669"/>
    <property type="project" value="UniProtKB-SubCell"/>
</dbReference>
<dbReference type="GO" id="GO:0009523">
    <property type="term" value="C:photosystem II"/>
    <property type="evidence" value="ECO:0007669"/>
    <property type="project" value="UniProtKB-KW"/>
</dbReference>
<dbReference type="GO" id="GO:0016168">
    <property type="term" value="F:chlorophyll binding"/>
    <property type="evidence" value="ECO:0007669"/>
    <property type="project" value="UniProtKB-UniRule"/>
</dbReference>
<dbReference type="GO" id="GO:0045156">
    <property type="term" value="F:electron transporter, transferring electrons within the cyclic electron transport pathway of photosynthesis activity"/>
    <property type="evidence" value="ECO:0007669"/>
    <property type="project" value="InterPro"/>
</dbReference>
<dbReference type="GO" id="GO:0005506">
    <property type="term" value="F:iron ion binding"/>
    <property type="evidence" value="ECO:0007669"/>
    <property type="project" value="UniProtKB-UniRule"/>
</dbReference>
<dbReference type="GO" id="GO:0016682">
    <property type="term" value="F:oxidoreductase activity, acting on diphenols and related substances as donors, oxygen as acceptor"/>
    <property type="evidence" value="ECO:0007669"/>
    <property type="project" value="UniProtKB-UniRule"/>
</dbReference>
<dbReference type="GO" id="GO:0010242">
    <property type="term" value="F:oxygen evolving activity"/>
    <property type="evidence" value="ECO:0007669"/>
    <property type="project" value="UniProtKB-EC"/>
</dbReference>
<dbReference type="GO" id="GO:0009772">
    <property type="term" value="P:photosynthetic electron transport in photosystem II"/>
    <property type="evidence" value="ECO:0007669"/>
    <property type="project" value="InterPro"/>
</dbReference>
<dbReference type="GO" id="GO:0009635">
    <property type="term" value="P:response to herbicide"/>
    <property type="evidence" value="ECO:0007669"/>
    <property type="project" value="UniProtKB-KW"/>
</dbReference>
<dbReference type="CDD" id="cd09289">
    <property type="entry name" value="Photosystem-II_D1"/>
    <property type="match status" value="1"/>
</dbReference>
<dbReference type="FunFam" id="1.20.85.10:FF:000002">
    <property type="entry name" value="Photosystem II protein D1"/>
    <property type="match status" value="1"/>
</dbReference>
<dbReference type="Gene3D" id="1.20.85.10">
    <property type="entry name" value="Photosystem II protein D1-like"/>
    <property type="match status" value="1"/>
</dbReference>
<dbReference type="HAMAP" id="MF_01379">
    <property type="entry name" value="PSII_PsbA_D1"/>
    <property type="match status" value="1"/>
</dbReference>
<dbReference type="InterPro" id="IPR055266">
    <property type="entry name" value="D1/D2"/>
</dbReference>
<dbReference type="InterPro" id="IPR036854">
    <property type="entry name" value="Photo_II_D1/D2_sf"/>
</dbReference>
<dbReference type="InterPro" id="IPR000484">
    <property type="entry name" value="Photo_RC_L/M"/>
</dbReference>
<dbReference type="InterPro" id="IPR055265">
    <property type="entry name" value="Photo_RC_L/M_CS"/>
</dbReference>
<dbReference type="InterPro" id="IPR005867">
    <property type="entry name" value="PSII_D1"/>
</dbReference>
<dbReference type="NCBIfam" id="TIGR01151">
    <property type="entry name" value="psbA"/>
    <property type="match status" value="1"/>
</dbReference>
<dbReference type="PANTHER" id="PTHR33149:SF12">
    <property type="entry name" value="PHOTOSYSTEM II D2 PROTEIN"/>
    <property type="match status" value="1"/>
</dbReference>
<dbReference type="PANTHER" id="PTHR33149">
    <property type="entry name" value="PHOTOSYSTEM II PROTEIN D1"/>
    <property type="match status" value="1"/>
</dbReference>
<dbReference type="Pfam" id="PF00124">
    <property type="entry name" value="Photo_RC"/>
    <property type="match status" value="1"/>
</dbReference>
<dbReference type="PRINTS" id="PR00256">
    <property type="entry name" value="REACTNCENTRE"/>
</dbReference>
<dbReference type="SUPFAM" id="SSF81483">
    <property type="entry name" value="Bacterial photosystem II reaction centre, L and M subunits"/>
    <property type="match status" value="1"/>
</dbReference>
<dbReference type="PROSITE" id="PS00244">
    <property type="entry name" value="REACTION_CENTER"/>
    <property type="match status" value="1"/>
</dbReference>
<protein>
    <recommendedName>
        <fullName evidence="1">Photosystem II protein D1</fullName>
        <shortName evidence="1">PSII D1 protein</shortName>
        <ecNumber evidence="1">1.10.3.9</ecNumber>
    </recommendedName>
    <alternativeName>
        <fullName evidence="1">Photosystem II Q(B) protein</fullName>
    </alternativeName>
</protein>